<feature type="chain" id="PRO_0000389706" description="Acetyl-coenzyme A carboxylase carboxyl transferase subunit beta">
    <location>
        <begin position="1"/>
        <end position="296"/>
    </location>
</feature>
<feature type="domain" description="CoA carboxyltransferase N-terminal" evidence="2">
    <location>
        <begin position="25"/>
        <end position="294"/>
    </location>
</feature>
<proteinExistence type="inferred from homology"/>
<gene>
    <name evidence="1" type="primary">accD</name>
    <name type="ordered locus">BOV_2023</name>
</gene>
<evidence type="ECO:0000255" key="1">
    <source>
        <dbReference type="HAMAP-Rule" id="MF_01395"/>
    </source>
</evidence>
<evidence type="ECO:0000255" key="2">
    <source>
        <dbReference type="PROSITE-ProRule" id="PRU01136"/>
    </source>
</evidence>
<comment type="function">
    <text evidence="1">Component of the acetyl coenzyme A carboxylase (ACC) complex. Biotin carboxylase (BC) catalyzes the carboxylation of biotin on its carrier protein (BCCP) and then the CO(2) group is transferred by the transcarboxylase to acetyl-CoA to form malonyl-CoA.</text>
</comment>
<comment type="catalytic activity">
    <reaction evidence="1">
        <text>N(6)-carboxybiotinyl-L-lysyl-[protein] + acetyl-CoA = N(6)-biotinyl-L-lysyl-[protein] + malonyl-CoA</text>
        <dbReference type="Rhea" id="RHEA:54728"/>
        <dbReference type="Rhea" id="RHEA-COMP:10505"/>
        <dbReference type="Rhea" id="RHEA-COMP:10506"/>
        <dbReference type="ChEBI" id="CHEBI:57288"/>
        <dbReference type="ChEBI" id="CHEBI:57384"/>
        <dbReference type="ChEBI" id="CHEBI:83144"/>
        <dbReference type="ChEBI" id="CHEBI:83145"/>
        <dbReference type="EC" id="2.1.3.15"/>
    </reaction>
</comment>
<comment type="pathway">
    <text evidence="1">Lipid metabolism; malonyl-CoA biosynthesis; malonyl-CoA from acetyl-CoA: step 1/1.</text>
</comment>
<comment type="subunit">
    <text evidence="1">Acetyl-CoA carboxylase is a heterohexamer composed of biotin carboxyl carrier protein (AccB), biotin carboxylase (AccC) and two subunits each of ACCase subunit alpha (AccA) and ACCase subunit beta (AccD).</text>
</comment>
<comment type="subcellular location">
    <subcellularLocation>
        <location evidence="1">Cytoplasm</location>
    </subcellularLocation>
</comment>
<comment type="similarity">
    <text evidence="1">Belongs to the AccD/PCCB family.</text>
</comment>
<dbReference type="EC" id="2.1.3.15" evidence="1"/>
<dbReference type="EMBL" id="CP000708">
    <property type="protein sequence ID" value="ABQ61056.1"/>
    <property type="molecule type" value="Genomic_DNA"/>
</dbReference>
<dbReference type="RefSeq" id="WP_006014516.1">
    <property type="nucleotide sequence ID" value="NC_009505.1"/>
</dbReference>
<dbReference type="SMR" id="A5VT60"/>
<dbReference type="GeneID" id="45125357"/>
<dbReference type="KEGG" id="bov:BOV_2023"/>
<dbReference type="HOGENOM" id="CLU_015486_1_0_5"/>
<dbReference type="PhylomeDB" id="A5VT60"/>
<dbReference type="UniPathway" id="UPA00655">
    <property type="reaction ID" value="UER00711"/>
</dbReference>
<dbReference type="Proteomes" id="UP000006383">
    <property type="component" value="Chromosome I"/>
</dbReference>
<dbReference type="GO" id="GO:0009329">
    <property type="term" value="C:acetate CoA-transferase complex"/>
    <property type="evidence" value="ECO:0007669"/>
    <property type="project" value="TreeGrafter"/>
</dbReference>
<dbReference type="GO" id="GO:0003989">
    <property type="term" value="F:acetyl-CoA carboxylase activity"/>
    <property type="evidence" value="ECO:0007669"/>
    <property type="project" value="InterPro"/>
</dbReference>
<dbReference type="GO" id="GO:0005524">
    <property type="term" value="F:ATP binding"/>
    <property type="evidence" value="ECO:0007669"/>
    <property type="project" value="UniProtKB-KW"/>
</dbReference>
<dbReference type="GO" id="GO:0016743">
    <property type="term" value="F:carboxyl- or carbamoyltransferase activity"/>
    <property type="evidence" value="ECO:0007669"/>
    <property type="project" value="UniProtKB-UniRule"/>
</dbReference>
<dbReference type="GO" id="GO:0006633">
    <property type="term" value="P:fatty acid biosynthetic process"/>
    <property type="evidence" value="ECO:0007669"/>
    <property type="project" value="UniProtKB-KW"/>
</dbReference>
<dbReference type="GO" id="GO:2001295">
    <property type="term" value="P:malonyl-CoA biosynthetic process"/>
    <property type="evidence" value="ECO:0007669"/>
    <property type="project" value="UniProtKB-UniRule"/>
</dbReference>
<dbReference type="Gene3D" id="3.90.226.10">
    <property type="entry name" value="2-enoyl-CoA Hydratase, Chain A, domain 1"/>
    <property type="match status" value="1"/>
</dbReference>
<dbReference type="HAMAP" id="MF_01395">
    <property type="entry name" value="AcetylCoA_CT_beta"/>
    <property type="match status" value="1"/>
</dbReference>
<dbReference type="InterPro" id="IPR034733">
    <property type="entry name" value="AcCoA_carboxyl_beta"/>
</dbReference>
<dbReference type="InterPro" id="IPR000438">
    <property type="entry name" value="Acetyl_CoA_COase_Trfase_b_su"/>
</dbReference>
<dbReference type="InterPro" id="IPR029045">
    <property type="entry name" value="ClpP/crotonase-like_dom_sf"/>
</dbReference>
<dbReference type="InterPro" id="IPR011762">
    <property type="entry name" value="COA_CT_N"/>
</dbReference>
<dbReference type="NCBIfam" id="TIGR00515">
    <property type="entry name" value="accD"/>
    <property type="match status" value="1"/>
</dbReference>
<dbReference type="PANTHER" id="PTHR42995">
    <property type="entry name" value="ACETYL-COENZYME A CARBOXYLASE CARBOXYL TRANSFERASE SUBUNIT BETA, CHLOROPLASTIC"/>
    <property type="match status" value="1"/>
</dbReference>
<dbReference type="PANTHER" id="PTHR42995:SF5">
    <property type="entry name" value="ACETYL-COENZYME A CARBOXYLASE CARBOXYL TRANSFERASE SUBUNIT BETA, CHLOROPLASTIC"/>
    <property type="match status" value="1"/>
</dbReference>
<dbReference type="Pfam" id="PF01039">
    <property type="entry name" value="Carboxyl_trans"/>
    <property type="match status" value="1"/>
</dbReference>
<dbReference type="PRINTS" id="PR01070">
    <property type="entry name" value="ACCCTRFRASEB"/>
</dbReference>
<dbReference type="SUPFAM" id="SSF52096">
    <property type="entry name" value="ClpP/crotonase"/>
    <property type="match status" value="1"/>
</dbReference>
<dbReference type="PROSITE" id="PS50980">
    <property type="entry name" value="COA_CT_NTER"/>
    <property type="match status" value="1"/>
</dbReference>
<reference key="1">
    <citation type="journal article" date="2009" name="PLoS ONE">
        <title>Genome degradation in Brucella ovis corresponds with narrowing of its host range and tissue tropism.</title>
        <authorList>
            <person name="Tsolis R.M."/>
            <person name="Seshadri R."/>
            <person name="Santos R.L."/>
            <person name="Sangari F.J."/>
            <person name="Lobo J.M."/>
            <person name="de Jong M.F."/>
            <person name="Ren Q."/>
            <person name="Myers G."/>
            <person name="Brinkac L.M."/>
            <person name="Nelson W.C."/>
            <person name="Deboy R.T."/>
            <person name="Angiuoli S."/>
            <person name="Khouri H."/>
            <person name="Dimitrov G."/>
            <person name="Robinson J.R."/>
            <person name="Mulligan S."/>
            <person name="Walker R.L."/>
            <person name="Elzer P.E."/>
            <person name="Hassan K.A."/>
            <person name="Paulsen I.T."/>
        </authorList>
    </citation>
    <scope>NUCLEOTIDE SEQUENCE [LARGE SCALE GENOMIC DNA]</scope>
    <source>
        <strain>ATCC 25840 / 63/290 / NCTC 10512</strain>
    </source>
</reference>
<organism>
    <name type="scientific">Brucella ovis (strain ATCC 25840 / 63/290 / NCTC 10512)</name>
    <dbReference type="NCBI Taxonomy" id="444178"/>
    <lineage>
        <taxon>Bacteria</taxon>
        <taxon>Pseudomonadati</taxon>
        <taxon>Pseudomonadota</taxon>
        <taxon>Alphaproteobacteria</taxon>
        <taxon>Hyphomicrobiales</taxon>
        <taxon>Brucellaceae</taxon>
        <taxon>Brucella/Ochrobactrum group</taxon>
        <taxon>Brucella</taxon>
    </lineage>
</organism>
<sequence>MNWITNYVRPKINSMLGRREMPENLWIKDPSTGEMVFHKDLESNQFVIPSSGHHMRIKAKDRLRFFFDNGEYTTLEAPKVPLDPLKFRDEKKYIDRLKDYRSRTGMDDAIVNGLGTIEGLPIVATVQDFSFMGGSLGMGAGEAIIQGFEKAIELKRPLVLFASSGGARMQEGILSLMQLPRTTVAVEMLKEAGLLYIVVLTNPTTGGVTASYAMLGDIHIAEPGALIGFAGPRVIEQTIREKLPEGFQSSEYLMEHGMVDMVVSRLELKATIARLLKIMTKQPANSDAPAPPEAGC</sequence>
<keyword id="KW-0067">ATP-binding</keyword>
<keyword id="KW-0963">Cytoplasm</keyword>
<keyword id="KW-0275">Fatty acid biosynthesis</keyword>
<keyword id="KW-0276">Fatty acid metabolism</keyword>
<keyword id="KW-0444">Lipid biosynthesis</keyword>
<keyword id="KW-0443">Lipid metabolism</keyword>
<keyword id="KW-0547">Nucleotide-binding</keyword>
<keyword id="KW-0808">Transferase</keyword>
<protein>
    <recommendedName>
        <fullName evidence="1">Acetyl-coenzyme A carboxylase carboxyl transferase subunit beta</fullName>
        <shortName evidence="1">ACCase subunit beta</shortName>
        <shortName evidence="1">Acetyl-CoA carboxylase carboxyltransferase subunit beta</shortName>
        <ecNumber evidence="1">2.1.3.15</ecNumber>
    </recommendedName>
</protein>
<name>ACCD_BRUO2</name>
<accession>A5VT60</accession>